<comment type="function">
    <text evidence="1 5 6 7 8 10">Small-conductance calcium-activated nonselective cation (SCAN) channel which acts as a regulator of phospholipid scrambling in platelets and osteoblasts (PubMed:20056604, PubMed:21107324, PubMed:21908539, PubMed:22006324, PubMed:22946059). Phospholipid scrambling results in surface exposure of phosphatidylserine which in platelets is essential to trigger the clotting system whereas in osteoblasts is essential for the deposition of hydroxyapatite during bone mineralization (By similarity). Has calcium-dependent phospholipid scramblase activity; scrambles phosphatidylserine, phosphatidylcholine and galactosylceramide (By similarity). Can generate outwardly rectifying chloride channel currents in airway epithelial cells and Jurkat T lymphocytes (By similarity).</text>
</comment>
<comment type="function">
    <text evidence="11">(Microbial infection) Upon SARS coronavirus-2/SARS-CoV-2 infection, is activated by spike protein which increases the amplitude of spontaneous Ca(2+) signals and is required for spike-mediated syncytia.</text>
</comment>
<comment type="catalytic activity">
    <reaction evidence="1">
        <text>a 1,2-diacyl-sn-glycero-3-phospho-L-serine(in) = a 1,2-diacyl-sn-glycero-3-phospho-L-serine(out)</text>
        <dbReference type="Rhea" id="RHEA:38663"/>
        <dbReference type="ChEBI" id="CHEBI:57262"/>
    </reaction>
</comment>
<comment type="catalytic activity">
    <reaction evidence="1">
        <text>a beta-D-galactosyl-(1&lt;-&gt;1')-N-acylsphing-4-enine(out) = a beta-D-galactosyl-(1&lt;-&gt;1')-N-acylsphing-4-enine(in)</text>
        <dbReference type="Rhea" id="RHEA:38899"/>
        <dbReference type="ChEBI" id="CHEBI:18390"/>
    </reaction>
</comment>
<comment type="catalytic activity">
    <reaction evidence="1">
        <text>a 1,2-diacyl-sn-glycero-3-phosphocholine(in) = a 1,2-diacyl-sn-glycero-3-phosphocholine(out)</text>
        <dbReference type="Rhea" id="RHEA:38571"/>
        <dbReference type="ChEBI" id="CHEBI:57643"/>
    </reaction>
</comment>
<comment type="activity regulation">
    <text evidence="1">Exhibits synergistic gating by Ca(2+) and voltage (By similarity). Inhibited by some non-specific cation channel blockers such as: ruthenium red, 2-aminoethyl diphenylborinate (2APB), gadolinium and cadmium ions (By similarity).</text>
</comment>
<comment type="activity regulation">
    <text evidence="11">(Microbial infection) Activated by SARS coronavirus-2/SARS-CoV-2 spike protein.</text>
</comment>
<comment type="subunit">
    <text evidence="1">Homodimer.</text>
</comment>
<comment type="subcellular location">
    <subcellularLocation>
        <location evidence="5 6 9 10">Cell membrane</location>
        <topology evidence="5 6 9 10">Multi-pass membrane protein</topology>
    </subcellularLocation>
    <text>Shows an intracellular localization according to PubMed:22075693.</text>
</comment>
<comment type="alternative products">
    <event type="alternative splicing"/>
    <isoform>
        <id>Q4KMQ2-1</id>
        <name>1</name>
        <sequence type="displayed"/>
    </isoform>
    <isoform>
        <id>Q4KMQ2-2</id>
        <name>2</name>
        <sequence type="described" ref="VSP_042893"/>
    </isoform>
    <isoform>
        <id>Q4KMQ2-3</id>
        <name>3</name>
        <sequence type="described" ref="VSP_046819"/>
    </isoform>
    <isoform>
        <id>Q4KMQ2-4</id>
        <name>4</name>
        <sequence type="described" ref="VSP_046820"/>
    </isoform>
</comment>
<comment type="tissue specificity">
    <text evidence="3">Expressed in embryonic stem cell, fetal liver, retina, chronic myologenous leukemia and intestinal cancer.</text>
</comment>
<comment type="induction">
    <text evidence="11">(Microbial infection) Expression is induced by SARS coronavirus-2/SARS-CoV-2 spike protein.</text>
</comment>
<comment type="disease" evidence="6">
    <disease id="DI-03017">
        <name>Scott syndrome</name>
        <acronym>SCTS</acronym>
        <description>A mild bleeding disorder due to impaired surface exposure of procoagulant phosphatidylserine (PS) on platelets and other blood cells, following activation with Ca(2+)-elevating agents.</description>
        <dbReference type="MIM" id="262890"/>
    </disease>
    <text>The disease is caused by variants affecting the gene represented in this entry.</text>
</comment>
<comment type="miscellaneous">
    <text evidence="14">The term 'anoctamin' was coined because these channels are anion selective and are predicted to have eight (OCT) transmembrane segments. There is some dissatisfaction in the field with the Ano nomenclature because it is not certain that all the members of this family are anion channels or have the 8-transmembrane topology.</text>
</comment>
<comment type="similarity">
    <text evidence="14">Belongs to the anoctamin family.</text>
</comment>
<comment type="caution">
    <text evidence="1">Contains ten transmembrane regions, not eight as predicted.</text>
</comment>
<accession>Q4KMQ2</accession>
<accession>A6NNM6</accession>
<accession>B9EGG0</accession>
<accession>E7ENK4</accession>
<accession>E9PB30</accession>
<accession>E9PCT2</accession>
<accession>Q8N3Q2</accession>
<name>ANO6_HUMAN</name>
<reference key="1">
    <citation type="journal article" date="2006" name="Nature">
        <title>The finished DNA sequence of human chromosome 12.</title>
        <authorList>
            <person name="Scherer S.E."/>
            <person name="Muzny D.M."/>
            <person name="Buhay C.J."/>
            <person name="Chen R."/>
            <person name="Cree A."/>
            <person name="Ding Y."/>
            <person name="Dugan-Rocha S."/>
            <person name="Gill R."/>
            <person name="Gunaratne P."/>
            <person name="Harris R.A."/>
            <person name="Hawes A.C."/>
            <person name="Hernandez J."/>
            <person name="Hodgson A.V."/>
            <person name="Hume J."/>
            <person name="Jackson A."/>
            <person name="Khan Z.M."/>
            <person name="Kovar-Smith C."/>
            <person name="Lewis L.R."/>
            <person name="Lozado R.J."/>
            <person name="Metzker M.L."/>
            <person name="Milosavljevic A."/>
            <person name="Miner G.R."/>
            <person name="Montgomery K.T."/>
            <person name="Morgan M.B."/>
            <person name="Nazareth L.V."/>
            <person name="Scott G."/>
            <person name="Sodergren E."/>
            <person name="Song X.-Z."/>
            <person name="Steffen D."/>
            <person name="Lovering R.C."/>
            <person name="Wheeler D.A."/>
            <person name="Worley K.C."/>
            <person name="Yuan Y."/>
            <person name="Zhang Z."/>
            <person name="Adams C.Q."/>
            <person name="Ansari-Lari M.A."/>
            <person name="Ayele M."/>
            <person name="Brown M.J."/>
            <person name="Chen G."/>
            <person name="Chen Z."/>
            <person name="Clerc-Blankenburg K.P."/>
            <person name="Davis C."/>
            <person name="Delgado O."/>
            <person name="Dinh H.H."/>
            <person name="Draper H."/>
            <person name="Gonzalez-Garay M.L."/>
            <person name="Havlak P."/>
            <person name="Jackson L.R."/>
            <person name="Jacob L.S."/>
            <person name="Kelly S.H."/>
            <person name="Li L."/>
            <person name="Li Z."/>
            <person name="Liu J."/>
            <person name="Liu W."/>
            <person name="Lu J."/>
            <person name="Maheshwari M."/>
            <person name="Nguyen B.-V."/>
            <person name="Okwuonu G.O."/>
            <person name="Pasternak S."/>
            <person name="Perez L.M."/>
            <person name="Plopper F.J.H."/>
            <person name="Santibanez J."/>
            <person name="Shen H."/>
            <person name="Tabor P.E."/>
            <person name="Verduzco D."/>
            <person name="Waldron L."/>
            <person name="Wang Q."/>
            <person name="Williams G.A."/>
            <person name="Zhang J."/>
            <person name="Zhou J."/>
            <person name="Allen C.C."/>
            <person name="Amin A.G."/>
            <person name="Anyalebechi V."/>
            <person name="Bailey M."/>
            <person name="Barbaria J.A."/>
            <person name="Bimage K.E."/>
            <person name="Bryant N.P."/>
            <person name="Burch P.E."/>
            <person name="Burkett C.E."/>
            <person name="Burrell K.L."/>
            <person name="Calderon E."/>
            <person name="Cardenas V."/>
            <person name="Carter K."/>
            <person name="Casias K."/>
            <person name="Cavazos I."/>
            <person name="Cavazos S.R."/>
            <person name="Ceasar H."/>
            <person name="Chacko J."/>
            <person name="Chan S.N."/>
            <person name="Chavez D."/>
            <person name="Christopoulos C."/>
            <person name="Chu J."/>
            <person name="Cockrell R."/>
            <person name="Cox C.D."/>
            <person name="Dang M."/>
            <person name="Dathorne S.R."/>
            <person name="David R."/>
            <person name="Davis C.M."/>
            <person name="Davy-Carroll L."/>
            <person name="Deshazo D.R."/>
            <person name="Donlin J.E."/>
            <person name="D'Souza L."/>
            <person name="Eaves K.A."/>
            <person name="Egan A."/>
            <person name="Emery-Cohen A.J."/>
            <person name="Escotto M."/>
            <person name="Flagg N."/>
            <person name="Forbes L.D."/>
            <person name="Gabisi A.M."/>
            <person name="Garza M."/>
            <person name="Hamilton C."/>
            <person name="Henderson N."/>
            <person name="Hernandez O."/>
            <person name="Hines S."/>
            <person name="Hogues M.E."/>
            <person name="Huang M."/>
            <person name="Idlebird D.G."/>
            <person name="Johnson R."/>
            <person name="Jolivet A."/>
            <person name="Jones S."/>
            <person name="Kagan R."/>
            <person name="King L.M."/>
            <person name="Leal B."/>
            <person name="Lebow H."/>
            <person name="Lee S."/>
            <person name="LeVan J.M."/>
            <person name="Lewis L.C."/>
            <person name="London P."/>
            <person name="Lorensuhewa L.M."/>
            <person name="Loulseged H."/>
            <person name="Lovett D.A."/>
            <person name="Lucier A."/>
            <person name="Lucier R.L."/>
            <person name="Ma J."/>
            <person name="Madu R.C."/>
            <person name="Mapua P."/>
            <person name="Martindale A.D."/>
            <person name="Martinez E."/>
            <person name="Massey E."/>
            <person name="Mawhiney S."/>
            <person name="Meador M.G."/>
            <person name="Mendez S."/>
            <person name="Mercado C."/>
            <person name="Mercado I.C."/>
            <person name="Merritt C.E."/>
            <person name="Miner Z.L."/>
            <person name="Minja E."/>
            <person name="Mitchell T."/>
            <person name="Mohabbat F."/>
            <person name="Mohabbat K."/>
            <person name="Montgomery B."/>
            <person name="Moore N."/>
            <person name="Morris S."/>
            <person name="Munidasa M."/>
            <person name="Ngo R.N."/>
            <person name="Nguyen N.B."/>
            <person name="Nickerson E."/>
            <person name="Nwaokelemeh O.O."/>
            <person name="Nwokenkwo S."/>
            <person name="Obregon M."/>
            <person name="Oguh M."/>
            <person name="Oragunye N."/>
            <person name="Oviedo R.J."/>
            <person name="Parish B.J."/>
            <person name="Parker D.N."/>
            <person name="Parrish J."/>
            <person name="Parks K.L."/>
            <person name="Paul H.A."/>
            <person name="Payton B.A."/>
            <person name="Perez A."/>
            <person name="Perrin W."/>
            <person name="Pickens A."/>
            <person name="Primus E.L."/>
            <person name="Pu L.-L."/>
            <person name="Puazo M."/>
            <person name="Quiles M.M."/>
            <person name="Quiroz J.B."/>
            <person name="Rabata D."/>
            <person name="Reeves K."/>
            <person name="Ruiz S.J."/>
            <person name="Shao H."/>
            <person name="Sisson I."/>
            <person name="Sonaike T."/>
            <person name="Sorelle R.P."/>
            <person name="Sutton A.E."/>
            <person name="Svatek A.F."/>
            <person name="Svetz L.A."/>
            <person name="Tamerisa K.S."/>
            <person name="Taylor T.R."/>
            <person name="Teague B."/>
            <person name="Thomas N."/>
            <person name="Thorn R.D."/>
            <person name="Trejos Z.Y."/>
            <person name="Trevino B.K."/>
            <person name="Ukegbu O.N."/>
            <person name="Urban J.B."/>
            <person name="Vasquez L.I."/>
            <person name="Vera V.A."/>
            <person name="Villasana D.M."/>
            <person name="Wang L."/>
            <person name="Ward-Moore S."/>
            <person name="Warren J.T."/>
            <person name="Wei X."/>
            <person name="White F."/>
            <person name="Williamson A.L."/>
            <person name="Wleczyk R."/>
            <person name="Wooden H.S."/>
            <person name="Wooden S.H."/>
            <person name="Yen J."/>
            <person name="Yoon L."/>
            <person name="Yoon V."/>
            <person name="Zorrilla S.E."/>
            <person name="Nelson D."/>
            <person name="Kucherlapati R."/>
            <person name="Weinstock G."/>
            <person name="Gibbs R.A."/>
        </authorList>
    </citation>
    <scope>NUCLEOTIDE SEQUENCE [LARGE SCALE GENOMIC DNA]</scope>
</reference>
<reference key="2">
    <citation type="journal article" date="2004" name="Genome Res.">
        <title>The status, quality, and expansion of the NIH full-length cDNA project: the Mammalian Gene Collection (MGC).</title>
        <authorList>
            <consortium name="The MGC Project Team"/>
        </authorList>
    </citation>
    <scope>NUCLEOTIDE SEQUENCE [LARGE SCALE MRNA] (ISOFORMS 1 AND 2)</scope>
    <source>
        <tissue>Placenta</tissue>
        <tissue>Testis</tissue>
    </source>
</reference>
<reference key="3">
    <citation type="journal article" date="2007" name="BMC Genomics">
        <title>The full-ORF clone resource of the German cDNA consortium.</title>
        <authorList>
            <person name="Bechtel S."/>
            <person name="Rosenfelder H."/>
            <person name="Duda A."/>
            <person name="Schmidt C.P."/>
            <person name="Ernst U."/>
            <person name="Wellenreuther R."/>
            <person name="Mehrle A."/>
            <person name="Schuster C."/>
            <person name="Bahr A."/>
            <person name="Bloecker H."/>
            <person name="Heubner D."/>
            <person name="Hoerlein A."/>
            <person name="Michel G."/>
            <person name="Wedler H."/>
            <person name="Koehrer K."/>
            <person name="Ottenwaelder B."/>
            <person name="Poustka A."/>
            <person name="Wiemann S."/>
            <person name="Schupp I."/>
        </authorList>
    </citation>
    <scope>NUCLEOTIDE SEQUENCE [LARGE SCALE MRNA] OF 772-910 (ISOFORM 1/2)</scope>
    <source>
        <tissue>Adipose tissue</tissue>
    </source>
</reference>
<reference key="4">
    <citation type="journal article" date="2004" name="Int. J. Oncol.">
        <title>Identification and characterization of TMEM16E and TMEM16F genes in silico.</title>
        <authorList>
            <person name="Katoh M."/>
            <person name="Katoh M."/>
        </authorList>
    </citation>
    <scope>TISSUE SPECIFICITY</scope>
</reference>
<reference key="5">
    <citation type="journal article" date="2009" name="J. Proteome Res.">
        <title>Glycoproteomics analysis of human liver tissue by combination of multiple enzyme digestion and hydrazide chemistry.</title>
        <authorList>
            <person name="Chen R."/>
            <person name="Jiang X."/>
            <person name="Sun D."/>
            <person name="Han G."/>
            <person name="Wang F."/>
            <person name="Ye M."/>
            <person name="Wang L."/>
            <person name="Zou H."/>
        </authorList>
    </citation>
    <scope>GLYCOSYLATION [LARGE SCALE ANALYSIS] AT ASN-493</scope>
    <source>
        <tissue>Liver</tissue>
    </source>
</reference>
<reference key="6">
    <citation type="journal article" date="2010" name="J. Biol. Chem.">
        <title>Expression and function of epithelial anoctamins.</title>
        <authorList>
            <person name="Schreiber R."/>
            <person name="Uliyakina I."/>
            <person name="Kongsuphol P."/>
            <person name="Warth R."/>
            <person name="Mirza M."/>
            <person name="Martins J.R."/>
            <person name="Kunzelmann K."/>
        </authorList>
    </citation>
    <scope>FUNCTION</scope>
    <scope>SUBCELLULAR LOCATION</scope>
</reference>
<reference key="7">
    <citation type="journal article" date="2010" name="Nature">
        <title>Calcium-dependent phospholipid scrambling by TMEM16F.</title>
        <authorList>
            <person name="Suzuki J."/>
            <person name="Umeda M."/>
            <person name="Sims P.J."/>
            <person name="Nagata S."/>
        </authorList>
    </citation>
    <scope>FUNCTION</scope>
    <scope>SUBCELLULAR LOCATION</scope>
    <scope>INVOLVEMENT IN SCOTT SYNDROME</scope>
</reference>
<reference key="8">
    <citation type="journal article" date="2011" name="Acta Pharmacol. Sin.">
        <title>Physiological roles and diseases of Tmem16/Anoctamin proteins: are they all chloride channels?</title>
        <authorList>
            <person name="Duran C."/>
            <person name="Hartzell H.C."/>
        </authorList>
    </citation>
    <scope>REVIEW</scope>
</reference>
<reference key="9">
    <citation type="journal article" date="2011" name="Pflugers Arch.">
        <title>Anoctamins.</title>
        <authorList>
            <person name="Kunzelmann K."/>
            <person name="Tian Y."/>
            <person name="Martins J.R."/>
            <person name="Faria D."/>
            <person name="Kongsuphol P."/>
            <person name="Ousingsawat J."/>
            <person name="Thevenod F."/>
            <person name="Roussa E."/>
            <person name="Rock J."/>
            <person name="Schreiber R."/>
        </authorList>
    </citation>
    <scope>REVIEW</scope>
</reference>
<reference key="10">
    <citation type="journal article" date="2011" name="Proc. Natl. Acad. Sci. U.S.A.">
        <title>Anoctamin 6 is an essential component of the outwardly rectifying chloride channel.</title>
        <authorList>
            <person name="Martins J.R."/>
            <person name="Faria D."/>
            <person name="Kongsuphol P."/>
            <person name="Reisch B."/>
            <person name="Schreiber R."/>
            <person name="Kunzelmann K."/>
        </authorList>
    </citation>
    <scope>FUNCTION</scope>
</reference>
<reference key="11">
    <citation type="journal article" date="2012" name="Am. J. Physiol.">
        <title>ANOs 3-7 in the anoctamin/Tmem16 Cl- channel family are intracellular proteins.</title>
        <authorList>
            <person name="Duran C."/>
            <person name="Qu Z."/>
            <person name="Osunkoya A.O."/>
            <person name="Cui Y."/>
            <person name="Hartzell H.C."/>
        </authorList>
    </citation>
    <scope>SUBCELLULAR LOCATION</scope>
</reference>
<reference key="12">
    <citation type="journal article" date="2012" name="Exp. Physiol.">
        <title>The anoctamin (TMEM16) gene family: calcium-activated chloride channels come of age.</title>
        <authorList>
            <person name="Winpenny J.P."/>
            <person name="Gray M.A."/>
        </authorList>
    </citation>
    <scope>REVIEW</scope>
</reference>
<reference key="13">
    <citation type="journal article" date="2012" name="Exp. Physiol.">
        <title>The anoctamin family: TMEM16A and TMEM16B as calcium-activated chloride channels.</title>
        <authorList>
            <person name="Scudieri P."/>
            <person name="Sondo E."/>
            <person name="Ferrera L."/>
            <person name="Galietta L.J."/>
        </authorList>
    </citation>
    <scope>REVIEW</scope>
    <scope>ABSENCE OF CALCIUM-ACTIVATED CHLORIDE CHANNEL ACTIVITY</scope>
</reference>
<reference key="14">
    <citation type="journal article" date="2012" name="Exp. Physiol.">
        <title>Expression and function of epithelial anoctamins.</title>
        <authorList>
            <person name="Kunzelmann K."/>
            <person name="Schreiber R."/>
            <person name="Kmit A."/>
            <person name="Jantarajit W."/>
            <person name="Martins J.R."/>
            <person name="Faria D."/>
            <person name="Kongsuphol P."/>
            <person name="Ousingsawat J."/>
            <person name="Tian Y."/>
        </authorList>
    </citation>
    <scope>REVIEW</scope>
    <scope>FUNCTION</scope>
</reference>
<reference key="15">
    <citation type="journal article" date="2012" name="J. Cell Sci.">
        <title>Anoctamins are a family of Ca2+ activated Cl- channels.</title>
        <authorList>
            <person name="Tian Y."/>
            <person name="Schreiber R."/>
            <person name="Kunzelmann K."/>
        </authorList>
    </citation>
    <scope>FUNCTION</scope>
    <scope>SUBCELLULAR LOCATION</scope>
</reference>
<reference key="16">
    <citation type="journal article" date="2014" name="J. Proteomics">
        <title>An enzyme assisted RP-RPLC approach for in-depth analysis of human liver phosphoproteome.</title>
        <authorList>
            <person name="Bian Y."/>
            <person name="Song C."/>
            <person name="Cheng K."/>
            <person name="Dong M."/>
            <person name="Wang F."/>
            <person name="Huang J."/>
            <person name="Sun D."/>
            <person name="Wang L."/>
            <person name="Ye M."/>
            <person name="Zou H."/>
        </authorList>
    </citation>
    <scope>IDENTIFICATION BY MASS SPECTROMETRY [LARGE SCALE ANALYSIS]</scope>
    <source>
        <tissue>Liver</tissue>
    </source>
</reference>
<reference key="17">
    <citation type="journal article" date="2015" name="Proteomics">
        <title>N-terminome analysis of the human mitochondrial proteome.</title>
        <authorList>
            <person name="Vaca Jacome A.S."/>
            <person name="Rabilloud T."/>
            <person name="Schaeffer-Reiss C."/>
            <person name="Rompais M."/>
            <person name="Ayoub D."/>
            <person name="Lane L."/>
            <person name="Bairoch A."/>
            <person name="Van Dorsselaer A."/>
            <person name="Carapito C."/>
        </authorList>
    </citation>
    <scope>IDENTIFICATION BY MASS SPECTROMETRY [LARGE SCALE ANALYSIS]</scope>
</reference>
<reference key="18">
    <citation type="journal article" date="2021" name="Nature">
        <title>Drugs that inhibit TMEM16 proteins block SARS-CoV-2 Spike-induced syncytia.</title>
        <authorList>
            <person name="Braga L."/>
            <person name="Ali H."/>
            <person name="Secco I."/>
            <person name="Chiavacci E."/>
            <person name="Neves G."/>
            <person name="Goldhill D."/>
            <person name="Penn R."/>
            <person name="Jimenez-Guardeno J.M."/>
            <person name="Ortega-Prieto A.M."/>
            <person name="Bussani R."/>
            <person name="Cannata A."/>
            <person name="Rizzari G."/>
            <person name="Collesi C."/>
            <person name="Schneider E."/>
            <person name="Arosio D."/>
            <person name="Shah A.M."/>
            <person name="Barclay W.S."/>
            <person name="Malim M.H."/>
            <person name="Burrone J."/>
            <person name="Giacca M."/>
        </authorList>
    </citation>
    <scope>FUNCTION (MICROBIAL INFECTION)</scope>
    <scope>INDUCTION BY SARS-COV-2 INFECTION (MICROBIAL INFECTION)</scope>
</reference>
<feature type="chain" id="PRO_0000191757" description="Anoctamin-6">
    <location>
        <begin position="1"/>
        <end position="910"/>
    </location>
</feature>
<feature type="topological domain" description="Cytoplasmic" evidence="14">
    <location>
        <begin position="1"/>
        <end position="300"/>
    </location>
</feature>
<feature type="transmembrane region" description="Helical" evidence="1">
    <location>
        <begin position="301"/>
        <end position="321"/>
    </location>
</feature>
<feature type="topological domain" description="Extracellular" evidence="14">
    <location>
        <begin position="322"/>
        <end position="375"/>
    </location>
</feature>
<feature type="transmembrane region" description="Helical" evidence="1">
    <location>
        <begin position="376"/>
        <end position="396"/>
    </location>
</feature>
<feature type="topological domain" description="Cytoplasmic" evidence="14">
    <location>
        <begin position="397"/>
        <end position="455"/>
    </location>
</feature>
<feature type="transmembrane region" description="Helical" evidence="1">
    <location>
        <begin position="456"/>
        <end position="476"/>
    </location>
</feature>
<feature type="topological domain" description="Extracellular" evidence="14">
    <location>
        <begin position="477"/>
        <end position="509"/>
    </location>
</feature>
<feature type="transmembrane region" description="Helical" evidence="1">
    <location>
        <begin position="510"/>
        <end position="530"/>
    </location>
</feature>
<feature type="topological domain" description="Cytoplasmic" evidence="14">
    <location>
        <begin position="531"/>
        <end position="551"/>
    </location>
</feature>
<feature type="transmembrane region" description="Helical" evidence="1">
    <location>
        <begin position="552"/>
        <end position="572"/>
    </location>
</feature>
<feature type="topological domain" description="Extracellular" evidence="14">
    <location>
        <begin position="573"/>
        <end position="601"/>
    </location>
</feature>
<feature type="transmembrane region" description="Helical" evidence="1">
    <location>
        <begin position="602"/>
        <end position="621"/>
    </location>
</feature>
<feature type="topological domain" description="Cytoplasmic" evidence="14">
    <location>
        <begin position="622"/>
        <end position="663"/>
    </location>
</feature>
<feature type="transmembrane region" description="Helical" evidence="1">
    <location>
        <begin position="664"/>
        <end position="684"/>
    </location>
</feature>
<feature type="transmembrane region" description="Helical" evidence="1">
    <location>
        <begin position="685"/>
        <end position="705"/>
    </location>
</feature>
<feature type="topological domain" description="Cytoplasmic" evidence="14">
    <location>
        <begin position="706"/>
        <end position="722"/>
    </location>
</feature>
<feature type="transmembrane region" description="Helical" evidence="1">
    <location>
        <begin position="723"/>
        <end position="743"/>
    </location>
</feature>
<feature type="topological domain" description="Extracellular" evidence="14">
    <location>
        <begin position="744"/>
        <end position="836"/>
    </location>
</feature>
<feature type="transmembrane region" description="Helical" evidence="1">
    <location>
        <begin position="837"/>
        <end position="857"/>
    </location>
</feature>
<feature type="topological domain" description="Cytoplasmic" evidence="14">
    <location>
        <begin position="858"/>
        <end position="910"/>
    </location>
</feature>
<feature type="binding site" evidence="1">
    <location>
        <position position="623"/>
    </location>
    <ligand>
        <name>Ca(2+)</name>
        <dbReference type="ChEBI" id="CHEBI:29108"/>
    </ligand>
</feature>
<feature type="binding site" evidence="1">
    <location>
        <position position="666"/>
    </location>
    <ligand>
        <name>Ca(2+)</name>
        <dbReference type="ChEBI" id="CHEBI:29108"/>
    </ligand>
</feature>
<feature type="binding site" evidence="1">
    <location>
        <position position="669"/>
    </location>
    <ligand>
        <name>Ca(2+)</name>
        <dbReference type="ChEBI" id="CHEBI:29108"/>
    </ligand>
</feature>
<feature type="glycosylation site" description="N-linked (GlcNAc...) asparagine" evidence="2">
    <location>
        <position position="329"/>
    </location>
</feature>
<feature type="glycosylation site" description="N-linked (GlcNAc...) asparagine" evidence="2">
    <location>
        <position position="361"/>
    </location>
</feature>
<feature type="glycosylation site" description="N-linked (GlcNAc...) asparagine" evidence="4">
    <location>
        <position position="493"/>
    </location>
</feature>
<feature type="glycosylation site" description="N-linked (GlcNAc...) asparagine" evidence="2">
    <location>
        <position position="777"/>
    </location>
</feature>
<feature type="glycosylation site" description="N-linked (GlcNAc...) asparagine" evidence="2">
    <location>
        <position position="790"/>
    </location>
</feature>
<feature type="glycosylation site" description="N-linked (GlcNAc...) asparagine" evidence="2">
    <location>
        <position position="802"/>
    </location>
</feature>
<feature type="disulfide bond" evidence="1">
    <location>
        <begin position="330"/>
        <end position="371"/>
    </location>
</feature>
<feature type="disulfide bond" evidence="1">
    <location>
        <begin position="337"/>
        <end position="364"/>
    </location>
</feature>
<feature type="disulfide bond" evidence="1">
    <location>
        <begin position="348"/>
        <end position="806"/>
    </location>
</feature>
<feature type="disulfide bond" evidence="1">
    <location>
        <begin position="351"/>
        <end position="355"/>
    </location>
</feature>
<feature type="disulfide bond" evidence="1">
    <location>
        <begin position="595"/>
        <end position="600"/>
    </location>
</feature>
<feature type="splice variant" id="VSP_046819" description="In isoform 3." evidence="14">
    <original>MKKMSRNVLLQMEEEEDDDDGDI</original>
    <variation>MFCAA</variation>
    <location>
        <begin position="1"/>
        <end position="23"/>
    </location>
</feature>
<feature type="splice variant" id="VSP_042893" description="In isoform 2." evidence="12">
    <original>I</original>
    <variation>IGDVPASRRPFLTPHTHLPSSL</variation>
    <location>
        <position position="23"/>
    </location>
</feature>
<feature type="splice variant" id="VSP_046820" description="In isoform 4." evidence="14">
    <original>HVIYSVKFFISYAIPDVSKRTKSKIQREKYLTQKLLHENHLKDMTKNMGVIAERMIEAVDNNLRPKSE</original>
    <variation>YLALLPRLGHSGMILAHCNLRLPVDCCMCYRFVDEIRLLEQLTSDFIDSLYYIFSISIISIFFSVTFFFLLLSLGPTPCFSVSNFLS</variation>
    <location>
        <begin position="843"/>
        <end position="910"/>
    </location>
</feature>
<feature type="sequence variant" id="VAR_028109" description="In dbSNP:rs2162321.">
    <original>A</original>
    <variation>T</variation>
    <location>
        <position position="128"/>
    </location>
</feature>
<feature type="sequence conflict" description="In Ref. 2; AAH98410." evidence="14" ref="2">
    <original>F</original>
    <variation>L</variation>
    <location>
        <position position="837"/>
    </location>
</feature>
<protein>
    <recommendedName>
        <fullName evidence="14">Anoctamin-6</fullName>
    </recommendedName>
    <alternativeName>
        <fullName>Small-conductance calcium-activated nonselective cation channel</fullName>
        <shortName>SCAN channel</shortName>
    </alternativeName>
    <alternativeName>
        <fullName>Transmembrane protein 16F</fullName>
    </alternativeName>
</protein>
<organism>
    <name type="scientific">Homo sapiens</name>
    <name type="common">Human</name>
    <dbReference type="NCBI Taxonomy" id="9606"/>
    <lineage>
        <taxon>Eukaryota</taxon>
        <taxon>Metazoa</taxon>
        <taxon>Chordata</taxon>
        <taxon>Craniata</taxon>
        <taxon>Vertebrata</taxon>
        <taxon>Euteleostomi</taxon>
        <taxon>Mammalia</taxon>
        <taxon>Eutheria</taxon>
        <taxon>Euarchontoglires</taxon>
        <taxon>Primates</taxon>
        <taxon>Haplorrhini</taxon>
        <taxon>Catarrhini</taxon>
        <taxon>Hominidae</taxon>
        <taxon>Homo</taxon>
    </lineage>
</organism>
<dbReference type="EMBL" id="AC009248">
    <property type="status" value="NOT_ANNOTATED_CDS"/>
    <property type="molecule type" value="Genomic_DNA"/>
</dbReference>
<dbReference type="EMBL" id="AC009778">
    <property type="status" value="NOT_ANNOTATED_CDS"/>
    <property type="molecule type" value="Genomic_DNA"/>
</dbReference>
<dbReference type="EMBL" id="AC063924">
    <property type="status" value="NOT_ANNOTATED_CDS"/>
    <property type="molecule type" value="Genomic_DNA"/>
</dbReference>
<dbReference type="EMBL" id="BC098410">
    <property type="protein sequence ID" value="AAH98410.1"/>
    <property type="molecule type" value="mRNA"/>
</dbReference>
<dbReference type="EMBL" id="BC136445">
    <property type="protein sequence ID" value="AAI36446.1"/>
    <property type="molecule type" value="mRNA"/>
</dbReference>
<dbReference type="EMBL" id="AL833405">
    <property type="protein sequence ID" value="CAD38638.1"/>
    <property type="molecule type" value="mRNA"/>
</dbReference>
<dbReference type="CCDS" id="CCDS31782.1">
    <molecule id="Q4KMQ2-1"/>
</dbReference>
<dbReference type="CCDS" id="CCDS44865.1">
    <molecule id="Q4KMQ2-4"/>
</dbReference>
<dbReference type="CCDS" id="CCDS44866.1">
    <molecule id="Q4KMQ2-3"/>
</dbReference>
<dbReference type="CCDS" id="CCDS55819.1">
    <molecule id="Q4KMQ2-2"/>
</dbReference>
<dbReference type="RefSeq" id="NP_001020527.2">
    <molecule id="Q4KMQ2-1"/>
    <property type="nucleotide sequence ID" value="NM_001025356.3"/>
</dbReference>
<dbReference type="RefSeq" id="NP_001136150.1">
    <molecule id="Q4KMQ2-3"/>
    <property type="nucleotide sequence ID" value="NM_001142678.2"/>
</dbReference>
<dbReference type="RefSeq" id="NP_001136151.1">
    <molecule id="Q4KMQ2-4"/>
    <property type="nucleotide sequence ID" value="NM_001142679.2"/>
</dbReference>
<dbReference type="RefSeq" id="NP_001191732.1">
    <molecule id="Q4KMQ2-2"/>
    <property type="nucleotide sequence ID" value="NM_001204803.2"/>
</dbReference>
<dbReference type="SMR" id="Q4KMQ2"/>
<dbReference type="BioGRID" id="128218">
    <property type="interactions" value="146"/>
</dbReference>
<dbReference type="FunCoup" id="Q4KMQ2">
    <property type="interactions" value="638"/>
</dbReference>
<dbReference type="IntAct" id="Q4KMQ2">
    <property type="interactions" value="69"/>
</dbReference>
<dbReference type="MINT" id="Q4KMQ2"/>
<dbReference type="STRING" id="9606.ENSP00000409126"/>
<dbReference type="TCDB" id="1.A.17.1.4">
    <property type="family name" value="the calcium-dependent chloride channel (ca-clc) family"/>
</dbReference>
<dbReference type="GlyConnect" id="1014">
    <property type="glycosylation" value="7 N-Linked glycans (2 sites)"/>
</dbReference>
<dbReference type="GlyCosmos" id="Q4KMQ2">
    <property type="glycosylation" value="6 sites, 7 glycans"/>
</dbReference>
<dbReference type="GlyGen" id="Q4KMQ2">
    <property type="glycosylation" value="8 sites, 19 N-linked glycans (6 sites), 1 O-linked glycan (1 site)"/>
</dbReference>
<dbReference type="iPTMnet" id="Q4KMQ2"/>
<dbReference type="PhosphoSitePlus" id="Q4KMQ2"/>
<dbReference type="SwissPalm" id="Q4KMQ2"/>
<dbReference type="BioMuta" id="ANO6"/>
<dbReference type="DMDM" id="116242820"/>
<dbReference type="jPOST" id="Q4KMQ2"/>
<dbReference type="MassIVE" id="Q4KMQ2"/>
<dbReference type="PaxDb" id="9606-ENSP00000409126"/>
<dbReference type="PeptideAtlas" id="Q4KMQ2"/>
<dbReference type="ProteomicsDB" id="19131"/>
<dbReference type="ProteomicsDB" id="19507"/>
<dbReference type="ProteomicsDB" id="62203">
    <molecule id="Q4KMQ2-1"/>
</dbReference>
<dbReference type="ProteomicsDB" id="62204">
    <molecule id="Q4KMQ2-2"/>
</dbReference>
<dbReference type="Pumba" id="Q4KMQ2"/>
<dbReference type="ABCD" id="Q4KMQ2">
    <property type="antibodies" value="11 sequenced antibodies"/>
</dbReference>
<dbReference type="Antibodypedia" id="42608">
    <property type="antibodies" value="133 antibodies from 22 providers"/>
</dbReference>
<dbReference type="DNASU" id="196527"/>
<dbReference type="Ensembl" id="ENST00000320560.13">
    <molecule id="Q4KMQ2-1"/>
    <property type="protein sequence ID" value="ENSP00000320087.8"/>
    <property type="gene ID" value="ENSG00000177119.17"/>
</dbReference>
<dbReference type="Ensembl" id="ENST00000423947.7">
    <molecule id="Q4KMQ2-2"/>
    <property type="protein sequence ID" value="ENSP00000409126.3"/>
    <property type="gene ID" value="ENSG00000177119.17"/>
</dbReference>
<dbReference type="Ensembl" id="ENST00000425752.6">
    <molecule id="Q4KMQ2-4"/>
    <property type="protein sequence ID" value="ENSP00000391417.2"/>
    <property type="gene ID" value="ENSG00000177119.17"/>
</dbReference>
<dbReference type="Ensembl" id="ENST00000441606.2">
    <molecule id="Q4KMQ2-3"/>
    <property type="protein sequence ID" value="ENSP00000413137.2"/>
    <property type="gene ID" value="ENSG00000177119.17"/>
</dbReference>
<dbReference type="Ensembl" id="ENST00000680201.1">
    <molecule id="Q4KMQ2-1"/>
    <property type="protein sequence ID" value="ENSP00000506222.1"/>
    <property type="gene ID" value="ENSG00000177119.17"/>
</dbReference>
<dbReference type="GeneID" id="196527"/>
<dbReference type="KEGG" id="hsa:196527"/>
<dbReference type="MANE-Select" id="ENST00000320560.13">
    <property type="protein sequence ID" value="ENSP00000320087.8"/>
    <property type="RefSeq nucleotide sequence ID" value="NM_001025356.3"/>
    <property type="RefSeq protein sequence ID" value="NP_001020527.2"/>
</dbReference>
<dbReference type="UCSC" id="uc001roo.4">
    <molecule id="Q4KMQ2-1"/>
    <property type="organism name" value="human"/>
</dbReference>
<dbReference type="AGR" id="HGNC:25240"/>
<dbReference type="CTD" id="196527"/>
<dbReference type="DisGeNET" id="196527"/>
<dbReference type="GeneCards" id="ANO6"/>
<dbReference type="HGNC" id="HGNC:25240">
    <property type="gene designation" value="ANO6"/>
</dbReference>
<dbReference type="HPA" id="ENSG00000177119">
    <property type="expression patterns" value="Low tissue specificity"/>
</dbReference>
<dbReference type="MalaCards" id="ANO6"/>
<dbReference type="MIM" id="262890">
    <property type="type" value="phenotype"/>
</dbReference>
<dbReference type="MIM" id="608663">
    <property type="type" value="gene"/>
</dbReference>
<dbReference type="neXtProt" id="NX_Q4KMQ2"/>
<dbReference type="OpenTargets" id="ENSG00000177119"/>
<dbReference type="Orphanet" id="806">
    <property type="disease" value="Scott syndrome"/>
</dbReference>
<dbReference type="PharmGKB" id="PA164715690"/>
<dbReference type="VEuPathDB" id="HostDB:ENSG00000177119"/>
<dbReference type="eggNOG" id="KOG2514">
    <property type="taxonomic scope" value="Eukaryota"/>
</dbReference>
<dbReference type="GeneTree" id="ENSGT00940000158969"/>
<dbReference type="HOGENOM" id="CLU_006685_1_3_1"/>
<dbReference type="InParanoid" id="Q4KMQ2"/>
<dbReference type="OMA" id="PYAVREQ"/>
<dbReference type="OrthoDB" id="296386at2759"/>
<dbReference type="PAN-GO" id="Q4KMQ2">
    <property type="GO annotations" value="5 GO annotations based on evolutionary models"/>
</dbReference>
<dbReference type="PhylomeDB" id="Q4KMQ2"/>
<dbReference type="TreeFam" id="TF314265"/>
<dbReference type="PathwayCommons" id="Q4KMQ2"/>
<dbReference type="Reactome" id="R-HSA-2672351">
    <property type="pathway name" value="Stimuli-sensing channels"/>
</dbReference>
<dbReference type="Reactome" id="R-HSA-6798695">
    <property type="pathway name" value="Neutrophil degranulation"/>
</dbReference>
<dbReference type="Reactome" id="R-HSA-9733458">
    <property type="pathway name" value="Induction of Cell-Cell Fusion"/>
</dbReference>
<dbReference type="SignaLink" id="Q4KMQ2"/>
<dbReference type="SIGNOR" id="Q4KMQ2"/>
<dbReference type="BioGRID-ORCS" id="196527">
    <property type="hits" value="14 hits in 1165 CRISPR screens"/>
</dbReference>
<dbReference type="ChiTaRS" id="ANO6">
    <property type="organism name" value="human"/>
</dbReference>
<dbReference type="GenomeRNAi" id="196527"/>
<dbReference type="Pharos" id="Q4KMQ2">
    <property type="development level" value="Tbio"/>
</dbReference>
<dbReference type="PRO" id="PR:Q4KMQ2"/>
<dbReference type="Proteomes" id="UP000005640">
    <property type="component" value="Chromosome 12"/>
</dbReference>
<dbReference type="RNAct" id="Q4KMQ2">
    <property type="molecule type" value="protein"/>
</dbReference>
<dbReference type="Bgee" id="ENSG00000177119">
    <property type="expression patterns" value="Expressed in epithelial cell of pancreas and 192 other cell types or tissues"/>
</dbReference>
<dbReference type="ExpressionAtlas" id="Q4KMQ2">
    <property type="expression patterns" value="baseline and differential"/>
</dbReference>
<dbReference type="GO" id="GO:0009986">
    <property type="term" value="C:cell surface"/>
    <property type="evidence" value="ECO:0007005"/>
    <property type="project" value="UniProtKB"/>
</dbReference>
<dbReference type="GO" id="GO:0034707">
    <property type="term" value="C:chloride channel complex"/>
    <property type="evidence" value="ECO:0000314"/>
    <property type="project" value="UniProtKB"/>
</dbReference>
<dbReference type="GO" id="GO:0005829">
    <property type="term" value="C:cytosol"/>
    <property type="evidence" value="ECO:0000314"/>
    <property type="project" value="HPA"/>
</dbReference>
<dbReference type="GO" id="GO:0070062">
    <property type="term" value="C:extracellular exosome"/>
    <property type="evidence" value="ECO:0007005"/>
    <property type="project" value="UniProtKB"/>
</dbReference>
<dbReference type="GO" id="GO:0016020">
    <property type="term" value="C:membrane"/>
    <property type="evidence" value="ECO:0007005"/>
    <property type="project" value="UniProtKB"/>
</dbReference>
<dbReference type="GO" id="GO:0005886">
    <property type="term" value="C:plasma membrane"/>
    <property type="evidence" value="ECO:0000314"/>
    <property type="project" value="HPA"/>
</dbReference>
<dbReference type="GO" id="GO:0035579">
    <property type="term" value="C:specific granule membrane"/>
    <property type="evidence" value="ECO:0000304"/>
    <property type="project" value="Reactome"/>
</dbReference>
<dbReference type="GO" id="GO:0070821">
    <property type="term" value="C:tertiary granule membrane"/>
    <property type="evidence" value="ECO:0000304"/>
    <property type="project" value="Reactome"/>
</dbReference>
<dbReference type="GO" id="GO:0005227">
    <property type="term" value="F:calcium-activated cation channel activity"/>
    <property type="evidence" value="ECO:0000314"/>
    <property type="project" value="UniProtKB"/>
</dbReference>
<dbReference type="GO" id="GO:0005254">
    <property type="term" value="F:chloride channel activity"/>
    <property type="evidence" value="ECO:0000318"/>
    <property type="project" value="GO_Central"/>
</dbReference>
<dbReference type="GO" id="GO:0005229">
    <property type="term" value="F:intracellularly calcium-gated chloride channel activity"/>
    <property type="evidence" value="ECO:0000315"/>
    <property type="project" value="UniProtKB"/>
</dbReference>
<dbReference type="GO" id="GO:0046872">
    <property type="term" value="F:metal ion binding"/>
    <property type="evidence" value="ECO:0007669"/>
    <property type="project" value="UniProtKB-KW"/>
</dbReference>
<dbReference type="GO" id="GO:0017128">
    <property type="term" value="F:phospholipid scramblase activity"/>
    <property type="evidence" value="ECO:0000315"/>
    <property type="project" value="FlyBase"/>
</dbReference>
<dbReference type="GO" id="GO:0046983">
    <property type="term" value="F:protein dimerization activity"/>
    <property type="evidence" value="ECO:0007669"/>
    <property type="project" value="InterPro"/>
</dbReference>
<dbReference type="GO" id="GO:0005247">
    <property type="term" value="F:voltage-gated chloride channel activity"/>
    <property type="evidence" value="ECO:0000315"/>
    <property type="project" value="UniProtKB"/>
</dbReference>
<dbReference type="GO" id="GO:0005244">
    <property type="term" value="F:voltage-gated monoatomic ion channel activity"/>
    <property type="evidence" value="ECO:0000250"/>
    <property type="project" value="UniProtKB"/>
</dbReference>
<dbReference type="GO" id="GO:0002543">
    <property type="term" value="P:activation of blood coagulation via clotting cascade"/>
    <property type="evidence" value="ECO:0000315"/>
    <property type="project" value="UniProtKB"/>
</dbReference>
<dbReference type="GO" id="GO:0032060">
    <property type="term" value="P:bleb assembly"/>
    <property type="evidence" value="ECO:0000315"/>
    <property type="project" value="UniProtKB"/>
</dbReference>
<dbReference type="GO" id="GO:0007596">
    <property type="term" value="P:blood coagulation"/>
    <property type="evidence" value="ECO:0000250"/>
    <property type="project" value="UniProtKB"/>
</dbReference>
<dbReference type="GO" id="GO:0061590">
    <property type="term" value="P:calcium activated phosphatidylcholine scrambling"/>
    <property type="evidence" value="ECO:0000318"/>
    <property type="project" value="GO_Central"/>
</dbReference>
<dbReference type="GO" id="GO:0061589">
    <property type="term" value="P:calcium activated phosphatidylserine scrambling"/>
    <property type="evidence" value="ECO:0000318"/>
    <property type="project" value="GO_Central"/>
</dbReference>
<dbReference type="GO" id="GO:0070588">
    <property type="term" value="P:calcium ion transmembrane transport"/>
    <property type="evidence" value="ECO:0000316"/>
    <property type="project" value="UniProtKB"/>
</dbReference>
<dbReference type="GO" id="GO:1902476">
    <property type="term" value="P:chloride transmembrane transport"/>
    <property type="evidence" value="ECO:0000315"/>
    <property type="project" value="UniProtKB"/>
</dbReference>
<dbReference type="GO" id="GO:0006821">
    <property type="term" value="P:chloride transport"/>
    <property type="evidence" value="ECO:0000315"/>
    <property type="project" value="UniProtKB"/>
</dbReference>
<dbReference type="GO" id="GO:0034220">
    <property type="term" value="P:monoatomic ion transmembrane transport"/>
    <property type="evidence" value="ECO:0000304"/>
    <property type="project" value="Reactome"/>
</dbReference>
<dbReference type="GO" id="GO:0045794">
    <property type="term" value="P:negative regulation of cell volume"/>
    <property type="evidence" value="ECO:0000315"/>
    <property type="project" value="UniProtKB"/>
</dbReference>
<dbReference type="GO" id="GO:0097045">
    <property type="term" value="P:phosphatidylserine exposure on blood platelet"/>
    <property type="evidence" value="ECO:0000315"/>
    <property type="project" value="UniProtKB"/>
</dbReference>
<dbReference type="GO" id="GO:0017121">
    <property type="term" value="P:plasma membrane phospholipid scrambling"/>
    <property type="evidence" value="ECO:0000315"/>
    <property type="project" value="UniProtKB"/>
</dbReference>
<dbReference type="GO" id="GO:0046931">
    <property type="term" value="P:pore complex assembly"/>
    <property type="evidence" value="ECO:0000315"/>
    <property type="project" value="UniProtKB"/>
</dbReference>
<dbReference type="GO" id="GO:0043065">
    <property type="term" value="P:positive regulation of apoptotic process"/>
    <property type="evidence" value="ECO:0000250"/>
    <property type="project" value="UniProtKB"/>
</dbReference>
<dbReference type="GO" id="GO:0030501">
    <property type="term" value="P:positive regulation of bone mineralization"/>
    <property type="evidence" value="ECO:0000315"/>
    <property type="project" value="UniProtKB"/>
</dbReference>
<dbReference type="GO" id="GO:2000353">
    <property type="term" value="P:positive regulation of endothelial cell apoptotic process"/>
    <property type="evidence" value="ECO:0000315"/>
    <property type="project" value="UniProtKB"/>
</dbReference>
<dbReference type="GO" id="GO:0034767">
    <property type="term" value="P:positive regulation of monoatomic ion transmembrane transport"/>
    <property type="evidence" value="ECO:0000315"/>
    <property type="project" value="UniProtKB"/>
</dbReference>
<dbReference type="GO" id="GO:0090026">
    <property type="term" value="P:positive regulation of monocyte chemotaxis"/>
    <property type="evidence" value="ECO:0000315"/>
    <property type="project" value="UniProtKB"/>
</dbReference>
<dbReference type="GO" id="GO:0060100">
    <property type="term" value="P:positive regulation of phagocytosis, engulfment"/>
    <property type="evidence" value="ECO:0000250"/>
    <property type="project" value="UniProtKB"/>
</dbReference>
<dbReference type="GO" id="GO:1903766">
    <property type="term" value="P:positive regulation of potassium ion export across plasma membrane"/>
    <property type="evidence" value="ECO:0000250"/>
    <property type="project" value="BHF-UCL"/>
</dbReference>
<dbReference type="GO" id="GO:0035590">
    <property type="term" value="P:purinergic nucleotide receptor signaling pathway"/>
    <property type="evidence" value="ECO:0000315"/>
    <property type="project" value="UniProtKB"/>
</dbReference>
<dbReference type="GO" id="GO:0035725">
    <property type="term" value="P:sodium ion transmembrane transport"/>
    <property type="evidence" value="ECO:0000316"/>
    <property type="project" value="UniProtKB"/>
</dbReference>
<dbReference type="InterPro" id="IPR032394">
    <property type="entry name" value="Anoct_dimer"/>
</dbReference>
<dbReference type="InterPro" id="IPR007632">
    <property type="entry name" value="Anoctamin"/>
</dbReference>
<dbReference type="InterPro" id="IPR049452">
    <property type="entry name" value="Anoctamin_TM"/>
</dbReference>
<dbReference type="PANTHER" id="PTHR12308">
    <property type="entry name" value="ANOCTAMIN"/>
    <property type="match status" value="1"/>
</dbReference>
<dbReference type="PANTHER" id="PTHR12308:SF21">
    <property type="entry name" value="ANOCTAMIN-6"/>
    <property type="match status" value="1"/>
</dbReference>
<dbReference type="Pfam" id="PF16178">
    <property type="entry name" value="Anoct_dimer"/>
    <property type="match status" value="1"/>
</dbReference>
<dbReference type="Pfam" id="PF04547">
    <property type="entry name" value="Anoctamin"/>
    <property type="match status" value="1"/>
</dbReference>
<proteinExistence type="evidence at protein level"/>
<gene>
    <name evidence="15" type="primary">ANO6</name>
    <name evidence="13" type="synonym">TMEM16F</name>
</gene>
<sequence>MKKMSRNVLLQMEEEEDDDDGDIVLENLGQTIVPDLGSLESQHDFRTPEFEEFNGKPDSLFFNDGQRRIDFVLVYEDESRKETNKKGTNEKQRRKRQAYESNLICHGLQLEATRSVLDDKLVFVKVHAPWEVLCTYAEIMHIKLPLKPNDLKNRSSAFGTLNWFTKVLSVDESIIKPEQEFFTAPFEKNRMNDFYIVDRDAFFNPATRSRIVYFILSRVKYQVINNVSKFGINRLVNSGIYKAAFPLHDCKFRRQSEDPSCPNERYLLYREWAHPRSIYKKQPLDLIRKYYGEKIGIYFAWLGYYTQMLLLAAVVGVACFLYGYLNQDNCTWSKEVCHPDIGGKIIMCPQCDRLCPFWKLNITCESSKKLCIFDSFGTLVFAVFMGVWVTLFLEFWKRRQAELEYEWDTVELQQEEQARPEYEARCTHVVINEITQEEERIPFTAWGKCIRITLCASAVFFWILLIIASVIGIIVYRLSVFIVFSAKLPKNINGTDPIQKYLTPQTATSITASIISFIIIMILNTIYEKVAIMITNFELPRTQTDYENSLTMKMFLFQFVNYYSSCFYIAFFKGKFVGYPGDPVYWLGKYRNEECDPGGCLLELTTQLTIIMGGKAIWNNIQEVLLPWIMNLIGRFHRVSGSEKITPRWEQDYHLQPMGKLGLFYEYLEMIIQFGFVTLFVASFPLAPLLALVNNILEIRVDAWKLTTQFRRLVPEKAQDIGAWQPIMQGIAILAVVTNAMIIAFTSDMIPRLVYYWSFSVPPYGDHTSYTMEGYINNTLSIFKVADFKNKSKGNPYSDLGNHTTCRYRDFRYPPGHPQEYKHNIYYWHVIAAKLAFIIVMEHVIYSVKFFISYAIPDVSKRTKSKIQREKYLTQKLLHENHLKDMTKNMGVIAERMIEAVDNNLRPKSE</sequence>
<keyword id="KW-0025">Alternative splicing</keyword>
<keyword id="KW-0106">Calcium</keyword>
<keyword id="KW-1003">Cell membrane</keyword>
<keyword id="KW-0868">Chloride</keyword>
<keyword id="KW-0869">Chloride channel</keyword>
<keyword id="KW-1015">Disulfide bond</keyword>
<keyword id="KW-0325">Glycoprotein</keyword>
<keyword id="KW-0945">Host-virus interaction</keyword>
<keyword id="KW-0407">Ion channel</keyword>
<keyword id="KW-0406">Ion transport</keyword>
<keyword id="KW-0445">Lipid transport</keyword>
<keyword id="KW-0472">Membrane</keyword>
<keyword id="KW-0479">Metal-binding</keyword>
<keyword id="KW-1267">Proteomics identification</keyword>
<keyword id="KW-1185">Reference proteome</keyword>
<keyword id="KW-0812">Transmembrane</keyword>
<keyword id="KW-1133">Transmembrane helix</keyword>
<keyword id="KW-0813">Transport</keyword>
<keyword id="KW-0851">Voltage-gated channel</keyword>
<evidence type="ECO:0000250" key="1">
    <source>
        <dbReference type="UniProtKB" id="Q6P9J9"/>
    </source>
</evidence>
<evidence type="ECO:0000255" key="2"/>
<evidence type="ECO:0000269" key="3">
    <source>
    </source>
</evidence>
<evidence type="ECO:0000269" key="4">
    <source>
    </source>
</evidence>
<evidence type="ECO:0000269" key="5">
    <source>
    </source>
</evidence>
<evidence type="ECO:0000269" key="6">
    <source>
    </source>
</evidence>
<evidence type="ECO:0000269" key="7">
    <source>
    </source>
</evidence>
<evidence type="ECO:0000269" key="8">
    <source>
    </source>
</evidence>
<evidence type="ECO:0000269" key="9">
    <source>
    </source>
</evidence>
<evidence type="ECO:0000269" key="10">
    <source>
    </source>
</evidence>
<evidence type="ECO:0000269" key="11">
    <source>
    </source>
</evidence>
<evidence type="ECO:0000303" key="12">
    <source>
    </source>
</evidence>
<evidence type="ECO:0000303" key="13">
    <source>
    </source>
</evidence>
<evidence type="ECO:0000305" key="14"/>
<evidence type="ECO:0000312" key="15">
    <source>
        <dbReference type="HGNC" id="HGNC:25240"/>
    </source>
</evidence>